<dbReference type="EMBL" id="AY687991">
    <property type="protein sequence ID" value="AAV49319.1"/>
    <property type="molecule type" value="mRNA"/>
</dbReference>
<dbReference type="EMBL" id="AC005896">
    <property type="protein sequence ID" value="AAC98053.1"/>
    <property type="molecule type" value="Genomic_DNA"/>
</dbReference>
<dbReference type="EMBL" id="CP002685">
    <property type="protein sequence ID" value="AEC09384.1"/>
    <property type="molecule type" value="Genomic_DNA"/>
</dbReference>
<dbReference type="EMBL" id="AY072359">
    <property type="protein sequence ID" value="AAL62351.1"/>
    <property type="molecule type" value="mRNA"/>
</dbReference>
<dbReference type="EMBL" id="AY114725">
    <property type="protein sequence ID" value="AAM48044.1"/>
    <property type="molecule type" value="mRNA"/>
</dbReference>
<dbReference type="PIR" id="D84791">
    <property type="entry name" value="D84791"/>
</dbReference>
<dbReference type="RefSeq" id="NP_181270.1">
    <property type="nucleotide sequence ID" value="NM_129289.5"/>
</dbReference>
<dbReference type="BioGRID" id="3654">
    <property type="interactions" value="35"/>
</dbReference>
<dbReference type="IntAct" id="Q9ZUT3">
    <property type="interactions" value="35"/>
</dbReference>
<dbReference type="STRING" id="3702.Q9ZUT3"/>
<dbReference type="TCDB" id="3.A.1.139.4">
    <property type="family name" value="the atp-binding cassette (abc) superfamily"/>
</dbReference>
<dbReference type="PaxDb" id="3702-AT2G37330.1"/>
<dbReference type="ProteomicsDB" id="244952"/>
<dbReference type="EnsemblPlants" id="AT2G37330.1">
    <property type="protein sequence ID" value="AT2G37330.1"/>
    <property type="gene ID" value="AT2G37330"/>
</dbReference>
<dbReference type="GeneID" id="818310"/>
<dbReference type="Gramene" id="AT2G37330.1">
    <property type="protein sequence ID" value="AT2G37330.1"/>
    <property type="gene ID" value="AT2G37330"/>
</dbReference>
<dbReference type="KEGG" id="ath:AT2G37330"/>
<dbReference type="Araport" id="AT2G37330"/>
<dbReference type="TAIR" id="AT2G37330">
    <property type="gene designation" value="ALS3"/>
</dbReference>
<dbReference type="eggNOG" id="ENOG502RHEJ">
    <property type="taxonomic scope" value="Eukaryota"/>
</dbReference>
<dbReference type="HOGENOM" id="CLU_076147_1_0_1"/>
<dbReference type="InParanoid" id="Q9ZUT3"/>
<dbReference type="OMA" id="PWYEPQY"/>
<dbReference type="OrthoDB" id="432685at2759"/>
<dbReference type="PhylomeDB" id="Q9ZUT3"/>
<dbReference type="PRO" id="PR:Q9ZUT3"/>
<dbReference type="Proteomes" id="UP000006548">
    <property type="component" value="Chromosome 2"/>
</dbReference>
<dbReference type="ExpressionAtlas" id="Q9ZUT3">
    <property type="expression patterns" value="baseline and differential"/>
</dbReference>
<dbReference type="GO" id="GO:0005886">
    <property type="term" value="C:plasma membrane"/>
    <property type="evidence" value="ECO:0000314"/>
    <property type="project" value="TAIR"/>
</dbReference>
<dbReference type="GO" id="GO:0010044">
    <property type="term" value="P:response to aluminum ion"/>
    <property type="evidence" value="ECO:0000315"/>
    <property type="project" value="TAIR"/>
</dbReference>
<dbReference type="InterPro" id="IPR005226">
    <property type="entry name" value="UPF0014_fam"/>
</dbReference>
<dbReference type="PANTHER" id="PTHR30028:SF0">
    <property type="entry name" value="PROTEIN ALUMINUM SENSITIVE 3"/>
    <property type="match status" value="1"/>
</dbReference>
<dbReference type="PANTHER" id="PTHR30028">
    <property type="entry name" value="UPF0014 INNER MEMBRANE PROTEIN YBBM-RELATED"/>
    <property type="match status" value="1"/>
</dbReference>
<dbReference type="Pfam" id="PF03649">
    <property type="entry name" value="UPF0014"/>
    <property type="match status" value="1"/>
</dbReference>
<organism>
    <name type="scientific">Arabidopsis thaliana</name>
    <name type="common">Mouse-ear cress</name>
    <dbReference type="NCBI Taxonomy" id="3702"/>
    <lineage>
        <taxon>Eukaryota</taxon>
        <taxon>Viridiplantae</taxon>
        <taxon>Streptophyta</taxon>
        <taxon>Embryophyta</taxon>
        <taxon>Tracheophyta</taxon>
        <taxon>Spermatophyta</taxon>
        <taxon>Magnoliopsida</taxon>
        <taxon>eudicotyledons</taxon>
        <taxon>Gunneridae</taxon>
        <taxon>Pentapetalae</taxon>
        <taxon>rosids</taxon>
        <taxon>malvids</taxon>
        <taxon>Brassicales</taxon>
        <taxon>Brassicaceae</taxon>
        <taxon>Camelineae</taxon>
        <taxon>Arabidopsis</taxon>
    </lineage>
</organism>
<name>ALS3_ARATH</name>
<protein>
    <recommendedName>
        <fullName>Protein ALUMINUM SENSITIVE 3</fullName>
    </recommendedName>
    <alternativeName>
        <fullName>ABC transporter I family member 16</fullName>
        <shortName>ABC transporter ABCI.16</shortName>
        <shortName>AtABCI16</shortName>
    </alternativeName>
    <alternativeName>
        <fullName>ybbM homolog protein</fullName>
    </alternativeName>
</protein>
<proteinExistence type="evidence at protein level"/>
<keyword id="KW-1003">Cell membrane</keyword>
<keyword id="KW-0472">Membrane</keyword>
<keyword id="KW-1185">Reference proteome</keyword>
<keyword id="KW-0812">Transmembrane</keyword>
<keyword id="KW-1133">Transmembrane helix</keyword>
<accession>Q9ZUT3</accession>
<gene>
    <name type="primary">ALS3</name>
    <name type="synonym">ABCI16</name>
    <name type="ordered locus">At2g37330</name>
    <name type="ORF">F3G5.12</name>
</gene>
<evidence type="ECO:0000255" key="1"/>
<evidence type="ECO:0000269" key="2">
    <source>
    </source>
</evidence>
<evidence type="ECO:0000269" key="3">
    <source>
    </source>
</evidence>
<evidence type="ECO:0000269" key="4">
    <source>
    </source>
</evidence>
<evidence type="ECO:0000269" key="5">
    <source>
    </source>
</evidence>
<evidence type="ECO:0000305" key="6"/>
<evidence type="ECO:0000305" key="7">
    <source>
    </source>
</evidence>
<sequence>MDLKWDDFFNDYEWLIVFLKGMVKPAAALVVVLLAVILSYSQNLSLEGEMIYSVSRSFLQLSVIGFVLQFIFNQENSGWIILAYLFMVSVAGYTAGQRARHVPRGKYVAGLSILAGTSITMFLLVLLNVFPFTPRYMIPIAGMLVGNAMTVTGVTMKQLRDDIKMQLNLVETALALGATPRQATLQQVKRALVISLSPVLDSCKTVGLISLPGAMTGMIMGGASPLEAIQLQIVVMNMMVGAATVSSITSTYLCWPSFFTKAYQLQTHVFSSD</sequence>
<reference key="1">
    <citation type="journal article" date="2005" name="Plant J.">
        <title>ALS3 encodes a phloem-localized ABC transporter-like protein that is required for aluminum tolerance in Arabidopsis.</title>
        <authorList>
            <person name="Larsen P.B."/>
            <person name="Geisler M.J.B."/>
            <person name="Jones C.A."/>
            <person name="Williams K.M."/>
            <person name="Cancel J.D."/>
        </authorList>
    </citation>
    <scope>NUCLEOTIDE SEQUENCE [MRNA]</scope>
    <scope>FUNCTION</scope>
    <scope>MUTAGENESIS OF SER-112</scope>
    <scope>SUBCELLULAR LOCATION</scope>
    <scope>TISSUE SPECIFICITY</scope>
    <scope>INDUCTION BY ALUMINUM</scope>
</reference>
<reference key="2">
    <citation type="journal article" date="1999" name="Nature">
        <title>Sequence and analysis of chromosome 2 of the plant Arabidopsis thaliana.</title>
        <authorList>
            <person name="Lin X."/>
            <person name="Kaul S."/>
            <person name="Rounsley S.D."/>
            <person name="Shea T.P."/>
            <person name="Benito M.-I."/>
            <person name="Town C.D."/>
            <person name="Fujii C.Y."/>
            <person name="Mason T.M."/>
            <person name="Bowman C.L."/>
            <person name="Barnstead M.E."/>
            <person name="Feldblyum T.V."/>
            <person name="Buell C.R."/>
            <person name="Ketchum K.A."/>
            <person name="Lee J.J."/>
            <person name="Ronning C.M."/>
            <person name="Koo H.L."/>
            <person name="Moffat K.S."/>
            <person name="Cronin L.A."/>
            <person name="Shen M."/>
            <person name="Pai G."/>
            <person name="Van Aken S."/>
            <person name="Umayam L."/>
            <person name="Tallon L.J."/>
            <person name="Gill J.E."/>
            <person name="Adams M.D."/>
            <person name="Carrera A.J."/>
            <person name="Creasy T.H."/>
            <person name="Goodman H.M."/>
            <person name="Somerville C.R."/>
            <person name="Copenhaver G.P."/>
            <person name="Preuss D."/>
            <person name="Nierman W.C."/>
            <person name="White O."/>
            <person name="Eisen J.A."/>
            <person name="Salzberg S.L."/>
            <person name="Fraser C.M."/>
            <person name="Venter J.C."/>
        </authorList>
    </citation>
    <scope>NUCLEOTIDE SEQUENCE [LARGE SCALE GENOMIC DNA]</scope>
    <source>
        <strain>cv. Columbia</strain>
    </source>
</reference>
<reference key="3">
    <citation type="journal article" date="2017" name="Plant J.">
        <title>Araport11: a complete reannotation of the Arabidopsis thaliana reference genome.</title>
        <authorList>
            <person name="Cheng C.Y."/>
            <person name="Krishnakumar V."/>
            <person name="Chan A.P."/>
            <person name="Thibaud-Nissen F."/>
            <person name="Schobel S."/>
            <person name="Town C.D."/>
        </authorList>
    </citation>
    <scope>GENOME REANNOTATION</scope>
    <source>
        <strain>cv. Columbia</strain>
    </source>
</reference>
<reference key="4">
    <citation type="journal article" date="2003" name="Science">
        <title>Empirical analysis of transcriptional activity in the Arabidopsis genome.</title>
        <authorList>
            <person name="Yamada K."/>
            <person name="Lim J."/>
            <person name="Dale J.M."/>
            <person name="Chen H."/>
            <person name="Shinn P."/>
            <person name="Palm C.J."/>
            <person name="Southwick A.M."/>
            <person name="Wu H.C."/>
            <person name="Kim C.J."/>
            <person name="Nguyen M."/>
            <person name="Pham P.K."/>
            <person name="Cheuk R.F."/>
            <person name="Karlin-Newmann G."/>
            <person name="Liu S.X."/>
            <person name="Lam B."/>
            <person name="Sakano H."/>
            <person name="Wu T."/>
            <person name="Yu G."/>
            <person name="Miranda M."/>
            <person name="Quach H.L."/>
            <person name="Tripp M."/>
            <person name="Chang C.H."/>
            <person name="Lee J.M."/>
            <person name="Toriumi M.J."/>
            <person name="Chan M.M."/>
            <person name="Tang C.C."/>
            <person name="Onodera C.S."/>
            <person name="Deng J.M."/>
            <person name="Akiyama K."/>
            <person name="Ansari Y."/>
            <person name="Arakawa T."/>
            <person name="Banh J."/>
            <person name="Banno F."/>
            <person name="Bowser L."/>
            <person name="Brooks S.Y."/>
            <person name="Carninci P."/>
            <person name="Chao Q."/>
            <person name="Choy N."/>
            <person name="Enju A."/>
            <person name="Goldsmith A.D."/>
            <person name="Gurjal M."/>
            <person name="Hansen N.F."/>
            <person name="Hayashizaki Y."/>
            <person name="Johnson-Hopson C."/>
            <person name="Hsuan V.W."/>
            <person name="Iida K."/>
            <person name="Karnes M."/>
            <person name="Khan S."/>
            <person name="Koesema E."/>
            <person name="Ishida J."/>
            <person name="Jiang P.X."/>
            <person name="Jones T."/>
            <person name="Kawai J."/>
            <person name="Kamiya A."/>
            <person name="Meyers C."/>
            <person name="Nakajima M."/>
            <person name="Narusaka M."/>
            <person name="Seki M."/>
            <person name="Sakurai T."/>
            <person name="Satou M."/>
            <person name="Tamse R."/>
            <person name="Vaysberg M."/>
            <person name="Wallender E.K."/>
            <person name="Wong C."/>
            <person name="Yamamura Y."/>
            <person name="Yuan S."/>
            <person name="Shinozaki K."/>
            <person name="Davis R.W."/>
            <person name="Theologis A."/>
            <person name="Ecker J.R."/>
        </authorList>
    </citation>
    <scope>NUCLEOTIDE SEQUENCE [LARGE SCALE MRNA]</scope>
    <source>
        <strain>cv. Columbia</strain>
    </source>
</reference>
<reference key="5">
    <citation type="journal article" date="1996" name="Plant Physiol.">
        <title>Arabidopsis mutants with increased sensitivity to aluminum.</title>
        <authorList>
            <person name="Larsen P.B."/>
            <person name="Tai C.-Y."/>
            <person name="Kochian L.V."/>
            <person name="Howell S.H."/>
        </authorList>
    </citation>
    <scope>FUNCTION</scope>
    <scope>MUTAGENESIS OF SER-112</scope>
</reference>
<reference key="6">
    <citation type="journal article" date="1997" name="Plant Physiol.">
        <title>Al inhibits both shoot development and root growth in als3, an Al-sensitive Arabidopsis mutant.</title>
        <authorList>
            <person name="Larsen P.B."/>
            <person name="Kochian L.V."/>
            <person name="Howell S.H."/>
        </authorList>
    </citation>
    <scope>FUNCTION</scope>
    <scope>MUTAGENESIS OF SER-112</scope>
</reference>
<reference key="7">
    <citation type="journal article" date="2008" name="Plant J.">
        <title>Identification of Arabidopsis thaliana phloem RNAs provides a search criterion for phloem-based transcripts hidden in complex datasets of microarray experiments.</title>
        <authorList>
            <person name="Deeken R."/>
            <person name="Ache P."/>
            <person name="Kajahn I."/>
            <person name="Klinkenberg J."/>
            <person name="Bringmann G."/>
            <person name="Hedrich R."/>
        </authorList>
    </citation>
    <scope>TRANSCRIPT MOBILITY</scope>
</reference>
<reference key="8">
    <citation type="journal article" date="2008" name="Trends Plant Sci.">
        <title>Plant ABC proteins - a unified nomenclature and updated inventory.</title>
        <authorList>
            <person name="Verrier P.J."/>
            <person name="Bird D."/>
            <person name="Burla B."/>
            <person name="Dassa E."/>
            <person name="Forestier C."/>
            <person name="Geisler M."/>
            <person name="Klein M."/>
            <person name="Kolukisaoglu H.U."/>
            <person name="Lee Y."/>
            <person name="Martinoia E."/>
            <person name="Murphy A."/>
            <person name="Rea P.A."/>
            <person name="Samuels L."/>
            <person name="Schulz B."/>
            <person name="Spalding E.J."/>
            <person name="Yazaki K."/>
            <person name="Theodoulou F.L."/>
        </authorList>
    </citation>
    <scope>GENE FAMILY</scope>
    <scope>NOMENCLATURE</scope>
</reference>
<reference key="9">
    <citation type="journal article" date="2009" name="Plant Physiol.">
        <title>STOP1 regulates multiple genes that protect arabidopsis from proton and aluminum toxicities.</title>
        <authorList>
            <person name="Sawaki Y."/>
            <person name="Iuchi S."/>
            <person name="Kobayashi Y."/>
            <person name="Kobayashi Y."/>
            <person name="Ikka T."/>
            <person name="Sakurai N."/>
            <person name="Fujita M."/>
            <person name="Shinozaki K."/>
            <person name="Shibata D."/>
            <person name="Kobayashi M."/>
            <person name="Koyama H."/>
        </authorList>
    </citation>
    <scope>INDUCTION BY STOP1</scope>
</reference>
<comment type="function">
    <text evidence="2 3 5">Required for aluminum (Al) resistance/tolerance, probably by translocating Al from sensitive tissues such as growing roots to tissues less sensisitive to the toxic effects of Al.</text>
</comment>
<comment type="subcellular location">
    <subcellularLocation>
        <location evidence="3">Cell membrane</location>
        <topology evidence="3">Multi-pass membrane protein</topology>
    </subcellularLocation>
</comment>
<comment type="tissue specificity">
    <text evidence="3">Expressed in roots, leaves, stems, and flowers.</text>
</comment>
<comment type="induction">
    <text evidence="3 4">By Al, primarily in leaf hydathodes and the phloem throughout the plant, along with the root cortex. Regulated positively by STOP1.</text>
</comment>
<comment type="miscellaneous">
    <text>ALS3 transcripts are mobile in the phloem sap.</text>
</comment>
<comment type="similarity">
    <text evidence="6">Belongs to the UPF0014 family.</text>
</comment>
<comment type="caution">
    <text evidence="7">Was originally (PubMed:18299247) thought to belong to the ABC transporter family. Lacks the conserved ABC domain, which is one of the features of the ABC transporter family.</text>
</comment>
<feature type="chain" id="PRO_0000379146" description="Protein ALUMINUM SENSITIVE 3">
    <location>
        <begin position="1"/>
        <end position="273"/>
    </location>
</feature>
<feature type="transmembrane region" description="Helical" evidence="1">
    <location>
        <begin position="14"/>
        <end position="34"/>
    </location>
</feature>
<feature type="transmembrane region" description="Helical" evidence="1">
    <location>
        <begin position="51"/>
        <end position="71"/>
    </location>
</feature>
<feature type="transmembrane region" description="Helical" evidence="1">
    <location>
        <begin position="76"/>
        <end position="96"/>
    </location>
</feature>
<feature type="transmembrane region" description="Helical" evidence="1">
    <location>
        <begin position="107"/>
        <end position="127"/>
    </location>
</feature>
<feature type="transmembrane region" description="Helical" evidence="1">
    <location>
        <begin position="136"/>
        <end position="156"/>
    </location>
</feature>
<feature type="transmembrane region" description="Helical" evidence="1">
    <location>
        <begin position="191"/>
        <end position="213"/>
    </location>
</feature>
<feature type="transmembrane region" description="Helical" evidence="1">
    <location>
        <begin position="228"/>
        <end position="248"/>
    </location>
</feature>
<feature type="mutagenesis site" description="In als3-1; inhibited leaf expansion and root growth in the presence of Al." evidence="2 3 5">
    <original>S</original>
    <variation>L</variation>
    <location>
        <position position="112"/>
    </location>
</feature>